<dbReference type="EC" id="5.3.1.9" evidence="1"/>
<dbReference type="EMBL" id="CP000051">
    <property type="protein sequence ID" value="AAX50646.1"/>
    <property type="status" value="ALT_INIT"/>
    <property type="molecule type" value="Genomic_DNA"/>
</dbReference>
<dbReference type="SMR" id="Q3KLX6"/>
<dbReference type="KEGG" id="cta:CTA_0412"/>
<dbReference type="HOGENOM" id="CLU_017947_3_1_0"/>
<dbReference type="UniPathway" id="UPA00109">
    <property type="reaction ID" value="UER00181"/>
</dbReference>
<dbReference type="UniPathway" id="UPA00138"/>
<dbReference type="Proteomes" id="UP000002532">
    <property type="component" value="Chromosome"/>
</dbReference>
<dbReference type="GO" id="GO:0005829">
    <property type="term" value="C:cytosol"/>
    <property type="evidence" value="ECO:0007669"/>
    <property type="project" value="TreeGrafter"/>
</dbReference>
<dbReference type="GO" id="GO:0097367">
    <property type="term" value="F:carbohydrate derivative binding"/>
    <property type="evidence" value="ECO:0007669"/>
    <property type="project" value="InterPro"/>
</dbReference>
<dbReference type="GO" id="GO:0004347">
    <property type="term" value="F:glucose-6-phosphate isomerase activity"/>
    <property type="evidence" value="ECO:0007669"/>
    <property type="project" value="UniProtKB-UniRule"/>
</dbReference>
<dbReference type="GO" id="GO:0048029">
    <property type="term" value="F:monosaccharide binding"/>
    <property type="evidence" value="ECO:0007669"/>
    <property type="project" value="TreeGrafter"/>
</dbReference>
<dbReference type="GO" id="GO:0006094">
    <property type="term" value="P:gluconeogenesis"/>
    <property type="evidence" value="ECO:0007669"/>
    <property type="project" value="UniProtKB-UniRule"/>
</dbReference>
<dbReference type="GO" id="GO:0051156">
    <property type="term" value="P:glucose 6-phosphate metabolic process"/>
    <property type="evidence" value="ECO:0007669"/>
    <property type="project" value="TreeGrafter"/>
</dbReference>
<dbReference type="GO" id="GO:0006096">
    <property type="term" value="P:glycolytic process"/>
    <property type="evidence" value="ECO:0007669"/>
    <property type="project" value="UniProtKB-UniRule"/>
</dbReference>
<dbReference type="CDD" id="cd05015">
    <property type="entry name" value="SIS_PGI_1"/>
    <property type="match status" value="1"/>
</dbReference>
<dbReference type="CDD" id="cd05016">
    <property type="entry name" value="SIS_PGI_2"/>
    <property type="match status" value="1"/>
</dbReference>
<dbReference type="Gene3D" id="1.10.1390.10">
    <property type="match status" value="1"/>
</dbReference>
<dbReference type="Gene3D" id="3.40.50.10490">
    <property type="entry name" value="Glucose-6-phosphate isomerase like protein, domain 1"/>
    <property type="match status" value="2"/>
</dbReference>
<dbReference type="HAMAP" id="MF_00473">
    <property type="entry name" value="G6P_isomerase"/>
    <property type="match status" value="1"/>
</dbReference>
<dbReference type="InterPro" id="IPR001672">
    <property type="entry name" value="G6P_Isomerase"/>
</dbReference>
<dbReference type="InterPro" id="IPR023096">
    <property type="entry name" value="G6P_Isomerase_C"/>
</dbReference>
<dbReference type="InterPro" id="IPR018189">
    <property type="entry name" value="Phosphoglucose_isomerase_CS"/>
</dbReference>
<dbReference type="InterPro" id="IPR046348">
    <property type="entry name" value="SIS_dom_sf"/>
</dbReference>
<dbReference type="InterPro" id="IPR035476">
    <property type="entry name" value="SIS_PGI_1"/>
</dbReference>
<dbReference type="InterPro" id="IPR035482">
    <property type="entry name" value="SIS_PGI_2"/>
</dbReference>
<dbReference type="NCBIfam" id="NF010695">
    <property type="entry name" value="PRK14095.1"/>
    <property type="match status" value="1"/>
</dbReference>
<dbReference type="PANTHER" id="PTHR11469">
    <property type="entry name" value="GLUCOSE-6-PHOSPHATE ISOMERASE"/>
    <property type="match status" value="1"/>
</dbReference>
<dbReference type="PANTHER" id="PTHR11469:SF1">
    <property type="entry name" value="GLUCOSE-6-PHOSPHATE ISOMERASE"/>
    <property type="match status" value="1"/>
</dbReference>
<dbReference type="Pfam" id="PF00342">
    <property type="entry name" value="PGI"/>
    <property type="match status" value="1"/>
</dbReference>
<dbReference type="PRINTS" id="PR00662">
    <property type="entry name" value="G6PISOMERASE"/>
</dbReference>
<dbReference type="SUPFAM" id="SSF53697">
    <property type="entry name" value="SIS domain"/>
    <property type="match status" value="1"/>
</dbReference>
<dbReference type="PROSITE" id="PS00765">
    <property type="entry name" value="P_GLUCOSE_ISOMERASE_1"/>
    <property type="match status" value="1"/>
</dbReference>
<dbReference type="PROSITE" id="PS00174">
    <property type="entry name" value="P_GLUCOSE_ISOMERASE_2"/>
    <property type="match status" value="1"/>
</dbReference>
<dbReference type="PROSITE" id="PS51463">
    <property type="entry name" value="P_GLUCOSE_ISOMERASE_3"/>
    <property type="match status" value="1"/>
</dbReference>
<comment type="function">
    <text evidence="1">Catalyzes the reversible isomerization of glucose-6-phosphate to fructose-6-phosphate.</text>
</comment>
<comment type="catalytic activity">
    <reaction evidence="1">
        <text>alpha-D-glucose 6-phosphate = beta-D-fructose 6-phosphate</text>
        <dbReference type="Rhea" id="RHEA:11816"/>
        <dbReference type="ChEBI" id="CHEBI:57634"/>
        <dbReference type="ChEBI" id="CHEBI:58225"/>
        <dbReference type="EC" id="5.3.1.9"/>
    </reaction>
</comment>
<comment type="pathway">
    <text evidence="1">Carbohydrate biosynthesis; gluconeogenesis.</text>
</comment>
<comment type="pathway">
    <text evidence="1">Carbohydrate degradation; glycolysis; D-glyceraldehyde 3-phosphate and glycerone phosphate from D-glucose: step 2/4.</text>
</comment>
<comment type="subcellular location">
    <subcellularLocation>
        <location evidence="1">Cytoplasm</location>
    </subcellularLocation>
</comment>
<comment type="similarity">
    <text evidence="1">Belongs to the GPI family.</text>
</comment>
<comment type="sequence caution" evidence="2">
    <conflict type="erroneous initiation">
        <sequence resource="EMBL-CDS" id="AAX50646"/>
    </conflict>
</comment>
<reference key="1">
    <citation type="journal article" date="2005" name="Infect. Immun.">
        <title>Comparative genomic analysis of Chlamydia trachomatis oculotropic and genitotropic strains.</title>
        <authorList>
            <person name="Carlson J.H."/>
            <person name="Porcella S.F."/>
            <person name="McClarty G."/>
            <person name="Caldwell H.D."/>
        </authorList>
    </citation>
    <scope>NUCLEOTIDE SEQUENCE [LARGE SCALE GENOMIC DNA]</scope>
    <source>
        <strain>ATCC VR-571B / DSM 19440 / HAR-13</strain>
    </source>
</reference>
<accession>Q3KLX6</accession>
<name>G6PI_CHLTA</name>
<organism>
    <name type="scientific">Chlamydia trachomatis serovar A (strain ATCC VR-571B / DSM 19440 / HAR-13)</name>
    <dbReference type="NCBI Taxonomy" id="315277"/>
    <lineage>
        <taxon>Bacteria</taxon>
        <taxon>Pseudomonadati</taxon>
        <taxon>Chlamydiota</taxon>
        <taxon>Chlamydiia</taxon>
        <taxon>Chlamydiales</taxon>
        <taxon>Chlamydiaceae</taxon>
        <taxon>Chlamydia/Chlamydophila group</taxon>
        <taxon>Chlamydia</taxon>
    </lineage>
</organism>
<protein>
    <recommendedName>
        <fullName evidence="1">Glucose-6-phosphate isomerase</fullName>
        <shortName evidence="1">GPI</shortName>
        <ecNumber evidence="1">5.3.1.9</ecNumber>
    </recommendedName>
    <alternativeName>
        <fullName evidence="1">Phosphoglucose isomerase</fullName>
        <shortName evidence="1">PGI</shortName>
    </alternativeName>
    <alternativeName>
        <fullName evidence="1">Phosphohexose isomerase</fullName>
        <shortName evidence="1">PHI</shortName>
    </alternativeName>
</protein>
<keyword id="KW-0963">Cytoplasm</keyword>
<keyword id="KW-0312">Gluconeogenesis</keyword>
<keyword id="KW-0324">Glycolysis</keyword>
<keyword id="KW-0413">Isomerase</keyword>
<feature type="chain" id="PRO_0000230916" description="Glucose-6-phosphate isomerase">
    <location>
        <begin position="1"/>
        <end position="524"/>
    </location>
</feature>
<feature type="active site" description="Proton donor" evidence="1">
    <location>
        <position position="346"/>
    </location>
</feature>
<feature type="active site" evidence="1">
    <location>
        <position position="377"/>
    </location>
</feature>
<feature type="active site" evidence="1">
    <location>
        <position position="492"/>
    </location>
</feature>
<evidence type="ECO:0000255" key="1">
    <source>
        <dbReference type="HAMAP-Rule" id="MF_00473"/>
    </source>
</evidence>
<evidence type="ECO:0000305" key="2"/>
<proteinExistence type="inferred from homology"/>
<sequence>MGKGFLDCESLVALQEMALHPIDLTASGCLSEERIQKNSLSAEGFTYSYATERVDDRCLEALQGLTEERELIKQMECMQQGAIMNRIEGFQSESRPVLHTATRAWVRDQDLHEEAAAIARHSKEEALRLAEFLYIARAKFSTLVQMGIGGSELGPKAMYFAMQGSCPSDKRIFFVSNIDPDNAAEVLREIDLEQTLVVVVSKSGTTLEPAANEELFRQAYQNKGLSIAKHFVAVTSQGSPMDDKSRYLEVFHLWDSIGGRFSATSMVGGVVLGFAFGYEAFIEFLQGAAAIDAHALTPKMRENLPLLSAMLGVWNRNLLGYPTTAVIPYSTGLKYFTAHLQQCGMESNGKSISREGKEISFRTSPIIWGDVGTNCQHSFFQSLHQGTDIVPVEFIGFLHNQRGLDCVLSGSSSSQKLFANLVAQSLALAQGRDNANSNKRFKGNRPSSILVAQQLSPRIAGSLLAFYEHKFAFQGFCWGINSFDQEGVSLGKELATQIIGIMSGNAPVEFPEARGMLRLFNVLT</sequence>
<gene>
    <name evidence="1" type="primary">pgi</name>
    <name type="ordered locus">CTA_0412</name>
</gene>